<gene>
    <name evidence="1" type="primary">cheD</name>
    <name type="ordered locus">DSY2969</name>
</gene>
<keyword id="KW-0145">Chemotaxis</keyword>
<keyword id="KW-0378">Hydrolase</keyword>
<keyword id="KW-1185">Reference proteome</keyword>
<proteinExistence type="inferred from homology"/>
<reference key="1">
    <citation type="journal article" date="2006" name="J. Bacteriol.">
        <title>Complete genome sequence of the dehalorespiring bacterium Desulfitobacterium hafniense Y51 and comparison with Dehalococcoides ethenogenes 195.</title>
        <authorList>
            <person name="Nonaka H."/>
            <person name="Keresztes G."/>
            <person name="Shinoda Y."/>
            <person name="Ikenaga Y."/>
            <person name="Abe M."/>
            <person name="Naito K."/>
            <person name="Inatomi K."/>
            <person name="Furukawa K."/>
            <person name="Inui M."/>
            <person name="Yukawa H."/>
        </authorList>
    </citation>
    <scope>NUCLEOTIDE SEQUENCE [LARGE SCALE GENOMIC DNA]</scope>
    <source>
        <strain>Y51</strain>
    </source>
</reference>
<organism>
    <name type="scientific">Desulfitobacterium hafniense (strain Y51)</name>
    <dbReference type="NCBI Taxonomy" id="138119"/>
    <lineage>
        <taxon>Bacteria</taxon>
        <taxon>Bacillati</taxon>
        <taxon>Bacillota</taxon>
        <taxon>Clostridia</taxon>
        <taxon>Eubacteriales</taxon>
        <taxon>Desulfitobacteriaceae</taxon>
        <taxon>Desulfitobacterium</taxon>
    </lineage>
</organism>
<feature type="chain" id="PRO_0000251029" description="Probable chemoreceptor glutamine deamidase CheD">
    <location>
        <begin position="1"/>
        <end position="160"/>
    </location>
</feature>
<accession>Q24T84</accession>
<sequence>MSNVISVGMADLKTTKAPNILMTAGLGSCIGICVHDPIQKVGGMAHIMLPTAGSAPGGNPAKYADTAMDLLVTEILRLGASKSRLRAKMAGGAQMFSFPGKPPVLKIGDRNAEQVIVELKRLGIPLLVSDVGGSFGRTIHFDVGTGDLKVRTINHGEKVI</sequence>
<protein>
    <recommendedName>
        <fullName evidence="1">Probable chemoreceptor glutamine deamidase CheD</fullName>
        <ecNumber evidence="1">3.5.1.44</ecNumber>
    </recommendedName>
</protein>
<name>CHED_DESHY</name>
<comment type="function">
    <text evidence="1">Probably deamidates glutamine residues to glutamate on methyl-accepting chemotaxis receptors (MCPs), playing an important role in chemotaxis.</text>
</comment>
<comment type="catalytic activity">
    <reaction evidence="1">
        <text>L-glutaminyl-[protein] + H2O = L-glutamyl-[protein] + NH4(+)</text>
        <dbReference type="Rhea" id="RHEA:16441"/>
        <dbReference type="Rhea" id="RHEA-COMP:10207"/>
        <dbReference type="Rhea" id="RHEA-COMP:10208"/>
        <dbReference type="ChEBI" id="CHEBI:15377"/>
        <dbReference type="ChEBI" id="CHEBI:28938"/>
        <dbReference type="ChEBI" id="CHEBI:29973"/>
        <dbReference type="ChEBI" id="CHEBI:30011"/>
        <dbReference type="EC" id="3.5.1.44"/>
    </reaction>
</comment>
<comment type="similarity">
    <text evidence="1">Belongs to the CheD family.</text>
</comment>
<evidence type="ECO:0000255" key="1">
    <source>
        <dbReference type="HAMAP-Rule" id="MF_01440"/>
    </source>
</evidence>
<dbReference type="EC" id="3.5.1.44" evidence="1"/>
<dbReference type="EMBL" id="AP008230">
    <property type="protein sequence ID" value="BAE84758.1"/>
    <property type="molecule type" value="Genomic_DNA"/>
</dbReference>
<dbReference type="RefSeq" id="WP_005816201.1">
    <property type="nucleotide sequence ID" value="NC_007907.1"/>
</dbReference>
<dbReference type="SMR" id="Q24T84"/>
<dbReference type="STRING" id="138119.DSY2969"/>
<dbReference type="KEGG" id="dsy:DSY2969"/>
<dbReference type="eggNOG" id="COG1871">
    <property type="taxonomic scope" value="Bacteria"/>
</dbReference>
<dbReference type="HOGENOM" id="CLU_087854_2_0_9"/>
<dbReference type="Proteomes" id="UP000001946">
    <property type="component" value="Chromosome"/>
</dbReference>
<dbReference type="GO" id="GO:0050568">
    <property type="term" value="F:protein-glutamine glutaminase activity"/>
    <property type="evidence" value="ECO:0007669"/>
    <property type="project" value="UniProtKB-UniRule"/>
</dbReference>
<dbReference type="GO" id="GO:0006935">
    <property type="term" value="P:chemotaxis"/>
    <property type="evidence" value="ECO:0007669"/>
    <property type="project" value="UniProtKB-UniRule"/>
</dbReference>
<dbReference type="CDD" id="cd16352">
    <property type="entry name" value="CheD"/>
    <property type="match status" value="1"/>
</dbReference>
<dbReference type="Gene3D" id="3.30.1330.200">
    <property type="match status" value="1"/>
</dbReference>
<dbReference type="HAMAP" id="MF_01440">
    <property type="entry name" value="CheD"/>
    <property type="match status" value="1"/>
</dbReference>
<dbReference type="InterPro" id="IPR038592">
    <property type="entry name" value="CheD-like_sf"/>
</dbReference>
<dbReference type="InterPro" id="IPR005659">
    <property type="entry name" value="Chemorcpt_Glu_NH3ase_CheD"/>
</dbReference>
<dbReference type="InterPro" id="IPR011324">
    <property type="entry name" value="Cytotoxic_necrot_fac-like_cat"/>
</dbReference>
<dbReference type="PANTHER" id="PTHR35147">
    <property type="entry name" value="CHEMORECEPTOR GLUTAMINE DEAMIDASE CHED-RELATED"/>
    <property type="match status" value="1"/>
</dbReference>
<dbReference type="PANTHER" id="PTHR35147:SF1">
    <property type="entry name" value="CHEMORECEPTOR GLUTAMINE DEAMIDASE CHED-RELATED"/>
    <property type="match status" value="1"/>
</dbReference>
<dbReference type="Pfam" id="PF03975">
    <property type="entry name" value="CheD"/>
    <property type="match status" value="1"/>
</dbReference>
<dbReference type="SUPFAM" id="SSF64438">
    <property type="entry name" value="CNF1/YfiH-like putative cysteine hydrolases"/>
    <property type="match status" value="1"/>
</dbReference>